<proteinExistence type="inferred from homology"/>
<gene>
    <name evidence="1" type="primary">dnaA</name>
    <name type="ordered locus">RMA_0948</name>
</gene>
<reference key="1">
    <citation type="journal article" date="2007" name="Genome Res.">
        <title>Lateral gene transfer between obligate intracellular bacteria: evidence from the Rickettsia massiliae genome.</title>
        <authorList>
            <person name="Blanc G."/>
            <person name="Ogata H."/>
            <person name="Robert C."/>
            <person name="Audic S."/>
            <person name="Claverie J.-M."/>
            <person name="Raoult D."/>
        </authorList>
    </citation>
    <scope>NUCLEOTIDE SEQUENCE [LARGE SCALE GENOMIC DNA]</scope>
    <source>
        <strain>Mtu5</strain>
    </source>
</reference>
<name>DNAA_RICM5</name>
<organism>
    <name type="scientific">Rickettsia massiliae (strain Mtu5)</name>
    <dbReference type="NCBI Taxonomy" id="416276"/>
    <lineage>
        <taxon>Bacteria</taxon>
        <taxon>Pseudomonadati</taxon>
        <taxon>Pseudomonadota</taxon>
        <taxon>Alphaproteobacteria</taxon>
        <taxon>Rickettsiales</taxon>
        <taxon>Rickettsiaceae</taxon>
        <taxon>Rickettsieae</taxon>
        <taxon>Rickettsia</taxon>
        <taxon>spotted fever group</taxon>
    </lineage>
</organism>
<sequence length="463" mass="52870">MSTNQIILTDQGDNYVNVWSHVAQDLYNHYGETLYNSWFSKVNFIESSLNTVILCAPTNFVRDWIKSKYSMVILQLFQHYNNTIKSIEIITKELPGITQTVIALPTKTFADIGSSELNAENIFSTLDVRFTFDNFVVGAPNELAYAAARAVAESSGAVSESNPLFLYGGVGLGKTHLMHAIGWYIKQNNPSRKVIYMSAEKFMYQFVKALRNKEVISFKEKFRSVDVLMIDDIQFICGKDSTQEEFFHTFNTLIDNNRQMVISCDRSPSDLDNIEDRIKSRLGWGLVADVHSTTYELRLGILESKIEQMNVKIPKDVIDFLASKIVSNVRELEGALNKVIAHSNFTLKEITLENTQNILRDLLRSNERIITVEDIQKKVASRYNIKLSDMSSSRRLREVARPRQIAMYLSKALTPKSLADIGKKFGKKDHTTVMHAIKKVEELLENDIELREEINLLMKILQN</sequence>
<evidence type="ECO:0000255" key="1">
    <source>
        <dbReference type="HAMAP-Rule" id="MF_00377"/>
    </source>
</evidence>
<accession>A8F284</accession>
<feature type="chain" id="PRO_1000060018" description="Chromosomal replication initiator protein DnaA">
    <location>
        <begin position="1"/>
        <end position="463"/>
    </location>
</feature>
<feature type="region of interest" description="Domain I, interacts with DnaA modulators" evidence="1">
    <location>
        <begin position="1"/>
        <end position="83"/>
    </location>
</feature>
<feature type="region of interest" description="Domain II" evidence="1">
    <location>
        <begin position="83"/>
        <end position="124"/>
    </location>
</feature>
<feature type="region of interest" description="Domain III, AAA+ region" evidence="1">
    <location>
        <begin position="125"/>
        <end position="343"/>
    </location>
</feature>
<feature type="region of interest" description="Domain IV, binds dsDNA" evidence="1">
    <location>
        <begin position="344"/>
        <end position="463"/>
    </location>
</feature>
<feature type="binding site" evidence="1">
    <location>
        <position position="171"/>
    </location>
    <ligand>
        <name>ATP</name>
        <dbReference type="ChEBI" id="CHEBI:30616"/>
    </ligand>
</feature>
<feature type="binding site" evidence="1">
    <location>
        <position position="173"/>
    </location>
    <ligand>
        <name>ATP</name>
        <dbReference type="ChEBI" id="CHEBI:30616"/>
    </ligand>
</feature>
<feature type="binding site" evidence="1">
    <location>
        <position position="174"/>
    </location>
    <ligand>
        <name>ATP</name>
        <dbReference type="ChEBI" id="CHEBI:30616"/>
    </ligand>
</feature>
<feature type="binding site" evidence="1">
    <location>
        <position position="175"/>
    </location>
    <ligand>
        <name>ATP</name>
        <dbReference type="ChEBI" id="CHEBI:30616"/>
    </ligand>
</feature>
<keyword id="KW-0067">ATP-binding</keyword>
<keyword id="KW-0963">Cytoplasm</keyword>
<keyword id="KW-0235">DNA replication</keyword>
<keyword id="KW-0238">DNA-binding</keyword>
<keyword id="KW-0446">Lipid-binding</keyword>
<keyword id="KW-0547">Nucleotide-binding</keyword>
<protein>
    <recommendedName>
        <fullName evidence="1">Chromosomal replication initiator protein DnaA</fullName>
    </recommendedName>
</protein>
<comment type="function">
    <text evidence="1">Plays an essential role in the initiation and regulation of chromosomal replication. ATP-DnaA binds to the origin of replication (oriC) to initiate formation of the DNA replication initiation complex once per cell cycle. Binds the DnaA box (a 9 base pair repeat at the origin) and separates the double-stranded (ds)DNA. Forms a right-handed helical filament on oriC DNA; dsDNA binds to the exterior of the filament while single-stranded (ss)DNA is stabiized in the filament's interior. The ATP-DnaA-oriC complex binds and stabilizes one strand of the AT-rich DNA unwinding element (DUE), permitting loading of DNA polymerase. After initiation quickly degrades to an ADP-DnaA complex that is not apt for DNA replication. Binds acidic phospholipids.</text>
</comment>
<comment type="subunit">
    <text evidence="1">Oligomerizes as a right-handed, spiral filament on DNA at oriC.</text>
</comment>
<comment type="subcellular location">
    <subcellularLocation>
        <location evidence="1">Cytoplasm</location>
    </subcellularLocation>
</comment>
<comment type="domain">
    <text evidence="1">Domain I is involved in oligomerization and binding regulators, domain II is flexibile and of varying length in different bacteria, domain III forms the AAA+ region, while domain IV binds dsDNA.</text>
</comment>
<comment type="similarity">
    <text evidence="1">Belongs to the DnaA family.</text>
</comment>
<dbReference type="EMBL" id="CP000683">
    <property type="protein sequence ID" value="ABV85020.1"/>
    <property type="molecule type" value="Genomic_DNA"/>
</dbReference>
<dbReference type="RefSeq" id="WP_012152990.1">
    <property type="nucleotide sequence ID" value="NC_009900.1"/>
</dbReference>
<dbReference type="SMR" id="A8F284"/>
<dbReference type="KEGG" id="rms:RMA_0948"/>
<dbReference type="HOGENOM" id="CLU_026910_3_0_5"/>
<dbReference type="Proteomes" id="UP000001311">
    <property type="component" value="Chromosome"/>
</dbReference>
<dbReference type="GO" id="GO:0005737">
    <property type="term" value="C:cytoplasm"/>
    <property type="evidence" value="ECO:0007669"/>
    <property type="project" value="UniProtKB-SubCell"/>
</dbReference>
<dbReference type="GO" id="GO:0005886">
    <property type="term" value="C:plasma membrane"/>
    <property type="evidence" value="ECO:0007669"/>
    <property type="project" value="TreeGrafter"/>
</dbReference>
<dbReference type="GO" id="GO:0005524">
    <property type="term" value="F:ATP binding"/>
    <property type="evidence" value="ECO:0007669"/>
    <property type="project" value="UniProtKB-UniRule"/>
</dbReference>
<dbReference type="GO" id="GO:0016887">
    <property type="term" value="F:ATP hydrolysis activity"/>
    <property type="evidence" value="ECO:0007669"/>
    <property type="project" value="InterPro"/>
</dbReference>
<dbReference type="GO" id="GO:0003688">
    <property type="term" value="F:DNA replication origin binding"/>
    <property type="evidence" value="ECO:0007669"/>
    <property type="project" value="UniProtKB-UniRule"/>
</dbReference>
<dbReference type="GO" id="GO:0008289">
    <property type="term" value="F:lipid binding"/>
    <property type="evidence" value="ECO:0007669"/>
    <property type="project" value="UniProtKB-KW"/>
</dbReference>
<dbReference type="GO" id="GO:0006270">
    <property type="term" value="P:DNA replication initiation"/>
    <property type="evidence" value="ECO:0007669"/>
    <property type="project" value="UniProtKB-UniRule"/>
</dbReference>
<dbReference type="GO" id="GO:0006275">
    <property type="term" value="P:regulation of DNA replication"/>
    <property type="evidence" value="ECO:0007669"/>
    <property type="project" value="UniProtKB-UniRule"/>
</dbReference>
<dbReference type="CDD" id="cd00009">
    <property type="entry name" value="AAA"/>
    <property type="match status" value="1"/>
</dbReference>
<dbReference type="CDD" id="cd06571">
    <property type="entry name" value="Bac_DnaA_C"/>
    <property type="match status" value="1"/>
</dbReference>
<dbReference type="FunFam" id="3.40.50.300:FF:000668">
    <property type="entry name" value="Chromosomal replication initiator protein DnaA"/>
    <property type="match status" value="1"/>
</dbReference>
<dbReference type="Gene3D" id="1.10.1750.10">
    <property type="match status" value="1"/>
</dbReference>
<dbReference type="Gene3D" id="1.10.8.60">
    <property type="match status" value="1"/>
</dbReference>
<dbReference type="Gene3D" id="3.30.300.180">
    <property type="match status" value="1"/>
</dbReference>
<dbReference type="Gene3D" id="3.40.50.300">
    <property type="entry name" value="P-loop containing nucleotide triphosphate hydrolases"/>
    <property type="match status" value="1"/>
</dbReference>
<dbReference type="HAMAP" id="MF_00377">
    <property type="entry name" value="DnaA_bact"/>
    <property type="match status" value="1"/>
</dbReference>
<dbReference type="InterPro" id="IPR003593">
    <property type="entry name" value="AAA+_ATPase"/>
</dbReference>
<dbReference type="InterPro" id="IPR001957">
    <property type="entry name" value="Chromosome_initiator_DnaA"/>
</dbReference>
<dbReference type="InterPro" id="IPR020591">
    <property type="entry name" value="Chromosome_initiator_DnaA-like"/>
</dbReference>
<dbReference type="InterPro" id="IPR018312">
    <property type="entry name" value="Chromosome_initiator_DnaA_CS"/>
</dbReference>
<dbReference type="InterPro" id="IPR013159">
    <property type="entry name" value="DnaA_C"/>
</dbReference>
<dbReference type="InterPro" id="IPR013317">
    <property type="entry name" value="DnaA_dom"/>
</dbReference>
<dbReference type="InterPro" id="IPR024633">
    <property type="entry name" value="DnaA_N_dom"/>
</dbReference>
<dbReference type="InterPro" id="IPR038454">
    <property type="entry name" value="DnaA_N_sf"/>
</dbReference>
<dbReference type="InterPro" id="IPR027417">
    <property type="entry name" value="P-loop_NTPase"/>
</dbReference>
<dbReference type="InterPro" id="IPR010921">
    <property type="entry name" value="Trp_repressor/repl_initiator"/>
</dbReference>
<dbReference type="NCBIfam" id="TIGR00362">
    <property type="entry name" value="DnaA"/>
    <property type="match status" value="1"/>
</dbReference>
<dbReference type="PANTHER" id="PTHR30050">
    <property type="entry name" value="CHROMOSOMAL REPLICATION INITIATOR PROTEIN DNAA"/>
    <property type="match status" value="1"/>
</dbReference>
<dbReference type="PANTHER" id="PTHR30050:SF2">
    <property type="entry name" value="CHROMOSOMAL REPLICATION INITIATOR PROTEIN DNAA"/>
    <property type="match status" value="1"/>
</dbReference>
<dbReference type="Pfam" id="PF00308">
    <property type="entry name" value="Bac_DnaA"/>
    <property type="match status" value="1"/>
</dbReference>
<dbReference type="Pfam" id="PF08299">
    <property type="entry name" value="Bac_DnaA_C"/>
    <property type="match status" value="1"/>
</dbReference>
<dbReference type="Pfam" id="PF11638">
    <property type="entry name" value="DnaA_N"/>
    <property type="match status" value="1"/>
</dbReference>
<dbReference type="PRINTS" id="PR00051">
    <property type="entry name" value="DNAA"/>
</dbReference>
<dbReference type="SMART" id="SM00382">
    <property type="entry name" value="AAA"/>
    <property type="match status" value="1"/>
</dbReference>
<dbReference type="SMART" id="SM00760">
    <property type="entry name" value="Bac_DnaA_C"/>
    <property type="match status" value="1"/>
</dbReference>
<dbReference type="SUPFAM" id="SSF52540">
    <property type="entry name" value="P-loop containing nucleoside triphosphate hydrolases"/>
    <property type="match status" value="1"/>
</dbReference>
<dbReference type="SUPFAM" id="SSF48295">
    <property type="entry name" value="TrpR-like"/>
    <property type="match status" value="1"/>
</dbReference>
<dbReference type="PROSITE" id="PS01008">
    <property type="entry name" value="DNAA"/>
    <property type="match status" value="1"/>
</dbReference>